<gene>
    <name evidence="1" type="primary">cysS</name>
    <name type="ordered locus">Sez_1754</name>
</gene>
<proteinExistence type="inferred from homology"/>
<reference key="1">
    <citation type="journal article" date="2008" name="PLoS ONE">
        <title>Genome sequence of a lancefield group C Streptococcus zooepidemicus strain causing epidemic nephritis: new information about an old disease.</title>
        <authorList>
            <person name="Beres S.B."/>
            <person name="Sesso R."/>
            <person name="Pinto S.W.L."/>
            <person name="Hoe N.P."/>
            <person name="Porcella S.F."/>
            <person name="Deleo F.R."/>
            <person name="Musser J.M."/>
        </authorList>
    </citation>
    <scope>NUCLEOTIDE SEQUENCE [LARGE SCALE GENOMIC DNA]</scope>
    <source>
        <strain>MGCS10565</strain>
    </source>
</reference>
<accession>B4U570</accession>
<evidence type="ECO:0000255" key="1">
    <source>
        <dbReference type="HAMAP-Rule" id="MF_00041"/>
    </source>
</evidence>
<protein>
    <recommendedName>
        <fullName evidence="1">Cysteine--tRNA ligase</fullName>
        <ecNumber evidence="1">6.1.1.16</ecNumber>
    </recommendedName>
    <alternativeName>
        <fullName evidence="1">Cysteinyl-tRNA synthetase</fullName>
        <shortName evidence="1">CysRS</shortName>
    </alternativeName>
</protein>
<name>SYC_STREM</name>
<sequence length="448" mass="49924">MMIKIYDTMTRSLREFVPITDKVVNMYVCGPTVYNYIHIGNARSAVAFDTVRRYFEYAGYTVNYISNFTDVDDKIIKAAKEAGLSPKQLADQFIAAFMEDTKALGVKPATKNPRVMDYMDEIIAFIAALIKKGYAYESAGDVYFRVAKASNYARLANKTIADLEAGASGRTDTETALKENPLDFALWKSAKPGEVSWTSPWSAGRPGWHIECSVMATELLGDTIDIHGGGADLEFPHHTNEIAQSEAKTSKTFANYWMHNGFVNVDNEKMSKSLGNFVTVHDLLKTVDGQTLRFFLATQHYRKPINFTEKAIHDAEVNLKYLKNTLQQPTVATADSSQLAAFVTAFKAAMNDDFNTANGITVLFDMAKWINSGAYSEAVKSAFEEMLAVFGIVFEAESLDTEIEQLIAERQEARANRDFAKADAIRDQLAAQGIKLLDTKDGVRWIRD</sequence>
<comment type="catalytic activity">
    <reaction evidence="1">
        <text>tRNA(Cys) + L-cysteine + ATP = L-cysteinyl-tRNA(Cys) + AMP + diphosphate</text>
        <dbReference type="Rhea" id="RHEA:17773"/>
        <dbReference type="Rhea" id="RHEA-COMP:9661"/>
        <dbReference type="Rhea" id="RHEA-COMP:9679"/>
        <dbReference type="ChEBI" id="CHEBI:30616"/>
        <dbReference type="ChEBI" id="CHEBI:33019"/>
        <dbReference type="ChEBI" id="CHEBI:35235"/>
        <dbReference type="ChEBI" id="CHEBI:78442"/>
        <dbReference type="ChEBI" id="CHEBI:78517"/>
        <dbReference type="ChEBI" id="CHEBI:456215"/>
        <dbReference type="EC" id="6.1.1.16"/>
    </reaction>
</comment>
<comment type="cofactor">
    <cofactor evidence="1">
        <name>Zn(2+)</name>
        <dbReference type="ChEBI" id="CHEBI:29105"/>
    </cofactor>
    <text evidence="1">Binds 1 zinc ion per subunit.</text>
</comment>
<comment type="subunit">
    <text evidence="1">Monomer.</text>
</comment>
<comment type="subcellular location">
    <subcellularLocation>
        <location evidence="1">Cytoplasm</location>
    </subcellularLocation>
</comment>
<comment type="similarity">
    <text evidence="1">Belongs to the class-I aminoacyl-tRNA synthetase family.</text>
</comment>
<organism>
    <name type="scientific">Streptococcus equi subsp. zooepidemicus (strain MGCS10565)</name>
    <dbReference type="NCBI Taxonomy" id="552526"/>
    <lineage>
        <taxon>Bacteria</taxon>
        <taxon>Bacillati</taxon>
        <taxon>Bacillota</taxon>
        <taxon>Bacilli</taxon>
        <taxon>Lactobacillales</taxon>
        <taxon>Streptococcaceae</taxon>
        <taxon>Streptococcus</taxon>
    </lineage>
</organism>
<keyword id="KW-0030">Aminoacyl-tRNA synthetase</keyword>
<keyword id="KW-0067">ATP-binding</keyword>
<keyword id="KW-0963">Cytoplasm</keyword>
<keyword id="KW-0436">Ligase</keyword>
<keyword id="KW-0479">Metal-binding</keyword>
<keyword id="KW-0547">Nucleotide-binding</keyword>
<keyword id="KW-0648">Protein biosynthesis</keyword>
<keyword id="KW-0862">Zinc</keyword>
<dbReference type="EC" id="6.1.1.16" evidence="1"/>
<dbReference type="EMBL" id="CP001129">
    <property type="protein sequence ID" value="ACG63081.1"/>
    <property type="molecule type" value="Genomic_DNA"/>
</dbReference>
<dbReference type="SMR" id="B4U570"/>
<dbReference type="KEGG" id="sez:Sez_1754"/>
<dbReference type="HOGENOM" id="CLU_013528_0_1_9"/>
<dbReference type="Proteomes" id="UP000001873">
    <property type="component" value="Chromosome"/>
</dbReference>
<dbReference type="GO" id="GO:0005829">
    <property type="term" value="C:cytosol"/>
    <property type="evidence" value="ECO:0007669"/>
    <property type="project" value="TreeGrafter"/>
</dbReference>
<dbReference type="GO" id="GO:0005524">
    <property type="term" value="F:ATP binding"/>
    <property type="evidence" value="ECO:0007669"/>
    <property type="project" value="UniProtKB-UniRule"/>
</dbReference>
<dbReference type="GO" id="GO:0004817">
    <property type="term" value="F:cysteine-tRNA ligase activity"/>
    <property type="evidence" value="ECO:0007669"/>
    <property type="project" value="UniProtKB-UniRule"/>
</dbReference>
<dbReference type="GO" id="GO:0008270">
    <property type="term" value="F:zinc ion binding"/>
    <property type="evidence" value="ECO:0007669"/>
    <property type="project" value="UniProtKB-UniRule"/>
</dbReference>
<dbReference type="GO" id="GO:0006423">
    <property type="term" value="P:cysteinyl-tRNA aminoacylation"/>
    <property type="evidence" value="ECO:0007669"/>
    <property type="project" value="UniProtKB-UniRule"/>
</dbReference>
<dbReference type="CDD" id="cd00672">
    <property type="entry name" value="CysRS_core"/>
    <property type="match status" value="1"/>
</dbReference>
<dbReference type="FunFam" id="3.40.50.620:FF:000130">
    <property type="entry name" value="Cysteine--tRNA ligase"/>
    <property type="match status" value="1"/>
</dbReference>
<dbReference type="Gene3D" id="1.20.120.1910">
    <property type="entry name" value="Cysteine-tRNA ligase, C-terminal anti-codon recognition domain"/>
    <property type="match status" value="1"/>
</dbReference>
<dbReference type="Gene3D" id="3.40.50.620">
    <property type="entry name" value="HUPs"/>
    <property type="match status" value="1"/>
</dbReference>
<dbReference type="HAMAP" id="MF_00041">
    <property type="entry name" value="Cys_tRNA_synth"/>
    <property type="match status" value="1"/>
</dbReference>
<dbReference type="InterPro" id="IPR015803">
    <property type="entry name" value="Cys-tRNA-ligase"/>
</dbReference>
<dbReference type="InterPro" id="IPR015273">
    <property type="entry name" value="Cys-tRNA-synt_Ia_DALR"/>
</dbReference>
<dbReference type="InterPro" id="IPR024909">
    <property type="entry name" value="Cys-tRNA/MSH_ligase"/>
</dbReference>
<dbReference type="InterPro" id="IPR056411">
    <property type="entry name" value="CysS_C"/>
</dbReference>
<dbReference type="InterPro" id="IPR014729">
    <property type="entry name" value="Rossmann-like_a/b/a_fold"/>
</dbReference>
<dbReference type="InterPro" id="IPR032678">
    <property type="entry name" value="tRNA-synt_1_cat_dom"/>
</dbReference>
<dbReference type="InterPro" id="IPR009080">
    <property type="entry name" value="tRNAsynth_Ia_anticodon-bd"/>
</dbReference>
<dbReference type="NCBIfam" id="TIGR00435">
    <property type="entry name" value="cysS"/>
    <property type="match status" value="1"/>
</dbReference>
<dbReference type="PANTHER" id="PTHR10890:SF3">
    <property type="entry name" value="CYSTEINE--TRNA LIGASE, CYTOPLASMIC"/>
    <property type="match status" value="1"/>
</dbReference>
<dbReference type="PANTHER" id="PTHR10890">
    <property type="entry name" value="CYSTEINYL-TRNA SYNTHETASE"/>
    <property type="match status" value="1"/>
</dbReference>
<dbReference type="Pfam" id="PF23493">
    <property type="entry name" value="CysS_C"/>
    <property type="match status" value="1"/>
</dbReference>
<dbReference type="Pfam" id="PF09190">
    <property type="entry name" value="DALR_2"/>
    <property type="match status" value="1"/>
</dbReference>
<dbReference type="Pfam" id="PF01406">
    <property type="entry name" value="tRNA-synt_1e"/>
    <property type="match status" value="1"/>
</dbReference>
<dbReference type="PRINTS" id="PR00983">
    <property type="entry name" value="TRNASYNTHCYS"/>
</dbReference>
<dbReference type="SMART" id="SM00840">
    <property type="entry name" value="DALR_2"/>
    <property type="match status" value="1"/>
</dbReference>
<dbReference type="SUPFAM" id="SSF47323">
    <property type="entry name" value="Anticodon-binding domain of a subclass of class I aminoacyl-tRNA synthetases"/>
    <property type="match status" value="1"/>
</dbReference>
<dbReference type="SUPFAM" id="SSF52374">
    <property type="entry name" value="Nucleotidylyl transferase"/>
    <property type="match status" value="1"/>
</dbReference>
<feature type="chain" id="PRO_1000090875" description="Cysteine--tRNA ligase">
    <location>
        <begin position="1"/>
        <end position="448"/>
    </location>
</feature>
<feature type="short sequence motif" description="'HIGH' region">
    <location>
        <begin position="31"/>
        <end position="41"/>
    </location>
</feature>
<feature type="short sequence motif" description="'KMSKS' region">
    <location>
        <begin position="269"/>
        <end position="273"/>
    </location>
</feature>
<feature type="binding site" evidence="1">
    <location>
        <position position="29"/>
    </location>
    <ligand>
        <name>Zn(2+)</name>
        <dbReference type="ChEBI" id="CHEBI:29105"/>
    </ligand>
</feature>
<feature type="binding site" evidence="1">
    <location>
        <position position="212"/>
    </location>
    <ligand>
        <name>Zn(2+)</name>
        <dbReference type="ChEBI" id="CHEBI:29105"/>
    </ligand>
</feature>
<feature type="binding site" evidence="1">
    <location>
        <position position="237"/>
    </location>
    <ligand>
        <name>Zn(2+)</name>
        <dbReference type="ChEBI" id="CHEBI:29105"/>
    </ligand>
</feature>
<feature type="binding site" evidence="1">
    <location>
        <position position="241"/>
    </location>
    <ligand>
        <name>Zn(2+)</name>
        <dbReference type="ChEBI" id="CHEBI:29105"/>
    </ligand>
</feature>
<feature type="binding site" evidence="1">
    <location>
        <position position="272"/>
    </location>
    <ligand>
        <name>ATP</name>
        <dbReference type="ChEBI" id="CHEBI:30616"/>
    </ligand>
</feature>